<gene>
    <name type="primary">gatc</name>
    <name type="ORF">DDB_G0284291</name>
</gene>
<name>GATC_DICDI</name>
<protein>
    <recommendedName>
        <fullName evidence="1">Glutamyl-tRNA(Gln) amidotransferase subunit C, mitochondrial</fullName>
        <shortName evidence="1">Glu-AdT subunit C</shortName>
        <ecNumber evidence="1">6.3.5.-</ecNumber>
    </recommendedName>
</protein>
<keyword id="KW-0067">ATP-binding</keyword>
<keyword id="KW-0436">Ligase</keyword>
<keyword id="KW-0496">Mitochondrion</keyword>
<keyword id="KW-0547">Nucleotide-binding</keyword>
<keyword id="KW-0648">Protein biosynthesis</keyword>
<keyword id="KW-1185">Reference proteome</keyword>
<organism>
    <name type="scientific">Dictyostelium discoideum</name>
    <name type="common">Social amoeba</name>
    <dbReference type="NCBI Taxonomy" id="44689"/>
    <lineage>
        <taxon>Eukaryota</taxon>
        <taxon>Amoebozoa</taxon>
        <taxon>Evosea</taxon>
        <taxon>Eumycetozoa</taxon>
        <taxon>Dictyostelia</taxon>
        <taxon>Dictyosteliales</taxon>
        <taxon>Dictyosteliaceae</taxon>
        <taxon>Dictyostelium</taxon>
    </lineage>
</organism>
<comment type="function">
    <text evidence="1">Allows the formation of correctly charged Gln-tRNA(Gln) through the transamidation of misacylated Glu-tRNA(Gln) in the mitochondria. The reaction takes place in the presence of glutamine and ATP through an activated gamma-phospho-Glu-tRNA(Gln).</text>
</comment>
<comment type="catalytic activity">
    <reaction evidence="1">
        <text>L-glutamyl-tRNA(Gln) + L-glutamine + ATP + H2O = L-glutaminyl-tRNA(Gln) + L-glutamate + ADP + phosphate + H(+)</text>
        <dbReference type="Rhea" id="RHEA:17521"/>
        <dbReference type="Rhea" id="RHEA-COMP:9681"/>
        <dbReference type="Rhea" id="RHEA-COMP:9684"/>
        <dbReference type="ChEBI" id="CHEBI:15377"/>
        <dbReference type="ChEBI" id="CHEBI:15378"/>
        <dbReference type="ChEBI" id="CHEBI:29985"/>
        <dbReference type="ChEBI" id="CHEBI:30616"/>
        <dbReference type="ChEBI" id="CHEBI:43474"/>
        <dbReference type="ChEBI" id="CHEBI:58359"/>
        <dbReference type="ChEBI" id="CHEBI:78520"/>
        <dbReference type="ChEBI" id="CHEBI:78521"/>
        <dbReference type="ChEBI" id="CHEBI:456216"/>
    </reaction>
</comment>
<comment type="subunit">
    <text evidence="1">Subunit of the heterotrimeric GatCAB amidotransferase (AdT) complex, composed of A, B and C subunits.</text>
</comment>
<comment type="subcellular location">
    <subcellularLocation>
        <location evidence="1">Mitochondrion</location>
    </subcellularLocation>
</comment>
<comment type="miscellaneous">
    <text evidence="1">This protein may be expected to contain an N-terminal transit peptide but none has been predicted.</text>
</comment>
<comment type="similarity">
    <text evidence="1">Belongs to the GatC family.</text>
</comment>
<comment type="sequence caution" evidence="3">
    <conflict type="erroneous gene model prediction">
        <sequence resource="EMBL-CDS" id="EAL65334"/>
    </conflict>
</comment>
<sequence>MLSIPEDKVEQYCDDLGGFLNSVESIQSVNTENVRPLHSILEDTQLTLHFEQTTVNQDHEHILDHSNNVQGGFFTVPKQISSHTNSQKSNKNNSIDDEF</sequence>
<proteinExistence type="inferred from homology"/>
<accession>Q54PU2</accession>
<feature type="chain" id="PRO_0000330368" description="Glutamyl-tRNA(Gln) amidotransferase subunit C, mitochondrial">
    <location>
        <begin position="1"/>
        <end position="99"/>
    </location>
</feature>
<feature type="region of interest" description="Disordered" evidence="2">
    <location>
        <begin position="78"/>
        <end position="99"/>
    </location>
</feature>
<feature type="compositionally biased region" description="Polar residues" evidence="2">
    <location>
        <begin position="78"/>
        <end position="93"/>
    </location>
</feature>
<evidence type="ECO:0000255" key="1">
    <source>
        <dbReference type="HAMAP-Rule" id="MF_03149"/>
    </source>
</evidence>
<evidence type="ECO:0000256" key="2">
    <source>
        <dbReference type="SAM" id="MobiDB-lite"/>
    </source>
</evidence>
<evidence type="ECO:0000305" key="3"/>
<dbReference type="EC" id="6.3.5.-" evidence="1"/>
<dbReference type="EMBL" id="AAFI02000064">
    <property type="protein sequence ID" value="EAL65334.2"/>
    <property type="status" value="ALT_SEQ"/>
    <property type="molecule type" value="Genomic_DNA"/>
</dbReference>
<dbReference type="RefSeq" id="XP_638703.2">
    <property type="nucleotide sequence ID" value="XM_633611.2"/>
</dbReference>
<dbReference type="SMR" id="Q54PU2"/>
<dbReference type="FunCoup" id="Q54PU2">
    <property type="interactions" value="44"/>
</dbReference>
<dbReference type="STRING" id="44689.Q54PU2"/>
<dbReference type="PaxDb" id="44689-DDB0266932"/>
<dbReference type="EnsemblProtists" id="EAL65334">
    <property type="protein sequence ID" value="EAL65334"/>
    <property type="gene ID" value="DDB_G0284291"/>
</dbReference>
<dbReference type="GeneID" id="8624534"/>
<dbReference type="KEGG" id="ddi:DDB_G0284291"/>
<dbReference type="dictyBase" id="DDB_G0284291">
    <property type="gene designation" value="gatC"/>
</dbReference>
<dbReference type="VEuPathDB" id="AmoebaDB:DDB_G0284291"/>
<dbReference type="InParanoid" id="Q54PU2"/>
<dbReference type="PRO" id="PR:Q54PU2"/>
<dbReference type="Proteomes" id="UP000002195">
    <property type="component" value="Chromosome 4"/>
</dbReference>
<dbReference type="GO" id="GO:0030956">
    <property type="term" value="C:glutamyl-tRNA(Gln) amidotransferase complex"/>
    <property type="evidence" value="ECO:0007669"/>
    <property type="project" value="UniProtKB-UniRule"/>
</dbReference>
<dbReference type="GO" id="GO:0005739">
    <property type="term" value="C:mitochondrion"/>
    <property type="evidence" value="ECO:0007669"/>
    <property type="project" value="UniProtKB-SubCell"/>
</dbReference>
<dbReference type="GO" id="GO:0005524">
    <property type="term" value="F:ATP binding"/>
    <property type="evidence" value="ECO:0007669"/>
    <property type="project" value="UniProtKB-KW"/>
</dbReference>
<dbReference type="GO" id="GO:0050567">
    <property type="term" value="F:glutaminyl-tRNA synthase (glutamine-hydrolyzing) activity"/>
    <property type="evidence" value="ECO:0007669"/>
    <property type="project" value="UniProtKB-UniRule"/>
</dbReference>
<dbReference type="GO" id="GO:0070681">
    <property type="term" value="P:glutaminyl-tRNAGln biosynthesis via transamidation"/>
    <property type="evidence" value="ECO:0007669"/>
    <property type="project" value="UniProtKB-UniRule"/>
</dbReference>
<dbReference type="GO" id="GO:0032543">
    <property type="term" value="P:mitochondrial translation"/>
    <property type="evidence" value="ECO:0007669"/>
    <property type="project" value="UniProtKB-UniRule"/>
</dbReference>
<dbReference type="GO" id="GO:0006450">
    <property type="term" value="P:regulation of translational fidelity"/>
    <property type="evidence" value="ECO:0007669"/>
    <property type="project" value="InterPro"/>
</dbReference>
<dbReference type="GO" id="GO:1903013">
    <property type="term" value="P:response to differentiation-inducing factor 1"/>
    <property type="evidence" value="ECO:0007005"/>
    <property type="project" value="dictyBase"/>
</dbReference>
<dbReference type="HAMAP" id="MF_00122">
    <property type="entry name" value="GatC"/>
    <property type="match status" value="1"/>
</dbReference>
<dbReference type="InterPro" id="IPR036113">
    <property type="entry name" value="Asp/Glu-ADT_sf_sub_c"/>
</dbReference>
<dbReference type="InterPro" id="IPR003837">
    <property type="entry name" value="GatC"/>
</dbReference>
<dbReference type="Pfam" id="PF02686">
    <property type="entry name" value="GatC"/>
    <property type="match status" value="1"/>
</dbReference>
<dbReference type="SUPFAM" id="SSF141000">
    <property type="entry name" value="Glu-tRNAGln amidotransferase C subunit"/>
    <property type="match status" value="1"/>
</dbReference>
<reference key="1">
    <citation type="journal article" date="2005" name="Nature">
        <title>The genome of the social amoeba Dictyostelium discoideum.</title>
        <authorList>
            <person name="Eichinger L."/>
            <person name="Pachebat J.A."/>
            <person name="Gloeckner G."/>
            <person name="Rajandream M.A."/>
            <person name="Sucgang R."/>
            <person name="Berriman M."/>
            <person name="Song J."/>
            <person name="Olsen R."/>
            <person name="Szafranski K."/>
            <person name="Xu Q."/>
            <person name="Tunggal B."/>
            <person name="Kummerfeld S."/>
            <person name="Madera M."/>
            <person name="Konfortov B.A."/>
            <person name="Rivero F."/>
            <person name="Bankier A.T."/>
            <person name="Lehmann R."/>
            <person name="Hamlin N."/>
            <person name="Davies R."/>
            <person name="Gaudet P."/>
            <person name="Fey P."/>
            <person name="Pilcher K."/>
            <person name="Chen G."/>
            <person name="Saunders D."/>
            <person name="Sodergren E.J."/>
            <person name="Davis P."/>
            <person name="Kerhornou A."/>
            <person name="Nie X."/>
            <person name="Hall N."/>
            <person name="Anjard C."/>
            <person name="Hemphill L."/>
            <person name="Bason N."/>
            <person name="Farbrother P."/>
            <person name="Desany B."/>
            <person name="Just E."/>
            <person name="Morio T."/>
            <person name="Rost R."/>
            <person name="Churcher C.M."/>
            <person name="Cooper J."/>
            <person name="Haydock S."/>
            <person name="van Driessche N."/>
            <person name="Cronin A."/>
            <person name="Goodhead I."/>
            <person name="Muzny D.M."/>
            <person name="Mourier T."/>
            <person name="Pain A."/>
            <person name="Lu M."/>
            <person name="Harper D."/>
            <person name="Lindsay R."/>
            <person name="Hauser H."/>
            <person name="James K.D."/>
            <person name="Quiles M."/>
            <person name="Madan Babu M."/>
            <person name="Saito T."/>
            <person name="Buchrieser C."/>
            <person name="Wardroper A."/>
            <person name="Felder M."/>
            <person name="Thangavelu M."/>
            <person name="Johnson D."/>
            <person name="Knights A."/>
            <person name="Loulseged H."/>
            <person name="Mungall K.L."/>
            <person name="Oliver K."/>
            <person name="Price C."/>
            <person name="Quail M.A."/>
            <person name="Urushihara H."/>
            <person name="Hernandez J."/>
            <person name="Rabbinowitsch E."/>
            <person name="Steffen D."/>
            <person name="Sanders M."/>
            <person name="Ma J."/>
            <person name="Kohara Y."/>
            <person name="Sharp S."/>
            <person name="Simmonds M.N."/>
            <person name="Spiegler S."/>
            <person name="Tivey A."/>
            <person name="Sugano S."/>
            <person name="White B."/>
            <person name="Walker D."/>
            <person name="Woodward J.R."/>
            <person name="Winckler T."/>
            <person name="Tanaka Y."/>
            <person name="Shaulsky G."/>
            <person name="Schleicher M."/>
            <person name="Weinstock G.M."/>
            <person name="Rosenthal A."/>
            <person name="Cox E.C."/>
            <person name="Chisholm R.L."/>
            <person name="Gibbs R.A."/>
            <person name="Loomis W.F."/>
            <person name="Platzer M."/>
            <person name="Kay R.R."/>
            <person name="Williams J.G."/>
            <person name="Dear P.H."/>
            <person name="Noegel A.A."/>
            <person name="Barrell B.G."/>
            <person name="Kuspa A."/>
        </authorList>
    </citation>
    <scope>NUCLEOTIDE SEQUENCE [LARGE SCALE GENOMIC DNA]</scope>
    <source>
        <strain>AX4</strain>
    </source>
</reference>